<sequence length="366" mass="42403">MSEKSASNNKAEFKRQSSPFREIISADHPIYKPAKGRYWLYVALPCPWAQRTLITRALKGLAPIIGCSVAHWHLDDKGWRFLEEGDGKTNERHWFDIAGGISSVNLNTSTPVANIPNNAHRLLVDGTDEPHYGYKRLSDFYFKTKPDYKGRFTVPVLWDLETCTIVNNESSDIIGIMNSAAFDEFVGEEYRQVRLVPRSLEAQITEFNSWVYDKINNGVYKAGFAECAEVYEREVTSLFQYLDKLENLLDKKYTDLEAEYGKNNKDKILDRYFAIGDTLTEADVRLYPTIVRFDVVYHQHFKCNLATIRDDYSRIHTWLKNIYWRHEAFQRTTDFTHIKLGYTRSQPRVNPIGITPLGPKPDIRPP</sequence>
<name>GTO3_YEAST</name>
<keyword id="KW-0963">Cytoplasm</keyword>
<keyword id="KW-1185">Reference proteome</keyword>
<keyword id="KW-0808">Transferase</keyword>
<protein>
    <recommendedName>
        <fullName>Glutathione S-transferase omega-like 3</fullName>
        <ecNumber>2.5.1.18</ecNumber>
    </recommendedName>
</protein>
<evidence type="ECO:0000250" key="1"/>
<evidence type="ECO:0000269" key="2">
    <source>
    </source>
</evidence>
<evidence type="ECO:0000269" key="3">
    <source>
    </source>
</evidence>
<evidence type="ECO:0000305" key="4"/>
<gene>
    <name type="primary">GTO3</name>
    <name type="ordered locus">YMR251W</name>
    <name type="ORF">YM9920.05</name>
</gene>
<dbReference type="EC" id="2.5.1.18"/>
<dbReference type="EMBL" id="Z48639">
    <property type="protein sequence ID" value="CAA88578.1"/>
    <property type="molecule type" value="Genomic_DNA"/>
</dbReference>
<dbReference type="EMBL" id="AY692580">
    <property type="protein sequence ID" value="AAT92599.1"/>
    <property type="molecule type" value="Genomic_DNA"/>
</dbReference>
<dbReference type="EMBL" id="BK006946">
    <property type="protein sequence ID" value="DAA10151.1"/>
    <property type="molecule type" value="Genomic_DNA"/>
</dbReference>
<dbReference type="PIR" id="S53073">
    <property type="entry name" value="S53073"/>
</dbReference>
<dbReference type="RefSeq" id="NP_013977.1">
    <property type="nucleotide sequence ID" value="NM_001182757.1"/>
</dbReference>
<dbReference type="SMR" id="Q04806"/>
<dbReference type="BioGRID" id="35429">
    <property type="interactions" value="31"/>
</dbReference>
<dbReference type="DIP" id="DIP-6643N"/>
<dbReference type="FunCoup" id="Q04806">
    <property type="interactions" value="87"/>
</dbReference>
<dbReference type="IntAct" id="Q04806">
    <property type="interactions" value="1"/>
</dbReference>
<dbReference type="STRING" id="4932.YMR251W"/>
<dbReference type="PaxDb" id="4932-YMR251W"/>
<dbReference type="PeptideAtlas" id="Q04806"/>
<dbReference type="EnsemblFungi" id="YMR251W_mRNA">
    <property type="protein sequence ID" value="YMR251W"/>
    <property type="gene ID" value="YMR251W"/>
</dbReference>
<dbReference type="GeneID" id="855292"/>
<dbReference type="KEGG" id="sce:YMR251W"/>
<dbReference type="AGR" id="SGD:S000004863"/>
<dbReference type="SGD" id="S000004863">
    <property type="gene designation" value="GTO3"/>
</dbReference>
<dbReference type="VEuPathDB" id="FungiDB:YMR251W"/>
<dbReference type="eggNOG" id="KOG2903">
    <property type="taxonomic scope" value="Eukaryota"/>
</dbReference>
<dbReference type="GeneTree" id="ENSGT00530000065151"/>
<dbReference type="HOGENOM" id="CLU_037263_0_1_1"/>
<dbReference type="InParanoid" id="Q04806"/>
<dbReference type="OMA" id="YQLFVSY"/>
<dbReference type="OrthoDB" id="2309723at2759"/>
<dbReference type="BioCyc" id="YEAST:G3O-32927-MONOMER"/>
<dbReference type="SABIO-RK" id="Q04806"/>
<dbReference type="BioGRID-ORCS" id="855292">
    <property type="hits" value="0 hits in 10 CRISPR screens"/>
</dbReference>
<dbReference type="PRO" id="PR:Q04806"/>
<dbReference type="Proteomes" id="UP000002311">
    <property type="component" value="Chromosome XIII"/>
</dbReference>
<dbReference type="RNAct" id="Q04806">
    <property type="molecule type" value="protein"/>
</dbReference>
<dbReference type="GO" id="GO:0005737">
    <property type="term" value="C:cytoplasm"/>
    <property type="evidence" value="ECO:0000314"/>
    <property type="project" value="SGD"/>
</dbReference>
<dbReference type="GO" id="GO:0004364">
    <property type="term" value="F:glutathione transferase activity"/>
    <property type="evidence" value="ECO:0000314"/>
    <property type="project" value="SGD"/>
</dbReference>
<dbReference type="GO" id="GO:0006749">
    <property type="term" value="P:glutathione metabolic process"/>
    <property type="evidence" value="ECO:0000250"/>
    <property type="project" value="SGD"/>
</dbReference>
<dbReference type="CDD" id="cd03190">
    <property type="entry name" value="GST_C_Omega_like"/>
    <property type="match status" value="1"/>
</dbReference>
<dbReference type="FunFam" id="1.20.1050.10:FF:000072">
    <property type="entry name" value="Omega class glutathione transferase"/>
    <property type="match status" value="1"/>
</dbReference>
<dbReference type="Gene3D" id="1.20.1050.10">
    <property type="match status" value="1"/>
</dbReference>
<dbReference type="Gene3D" id="3.40.30.10">
    <property type="entry name" value="Glutaredoxin"/>
    <property type="match status" value="1"/>
</dbReference>
<dbReference type="InterPro" id="IPR010987">
    <property type="entry name" value="Glutathione-S-Trfase_C-like"/>
</dbReference>
<dbReference type="InterPro" id="IPR036282">
    <property type="entry name" value="Glutathione-S-Trfase_C_sf"/>
</dbReference>
<dbReference type="InterPro" id="IPR004045">
    <property type="entry name" value="Glutathione_S-Trfase_N"/>
</dbReference>
<dbReference type="InterPro" id="IPR047047">
    <property type="entry name" value="GST_Omega-like_C"/>
</dbReference>
<dbReference type="InterPro" id="IPR016639">
    <property type="entry name" value="GST_Omega/GSH"/>
</dbReference>
<dbReference type="InterPro" id="IPR036249">
    <property type="entry name" value="Thioredoxin-like_sf"/>
</dbReference>
<dbReference type="PANTHER" id="PTHR32419:SF6">
    <property type="entry name" value="GLUTATHIONE S-TRANSFERASE OMEGA-LIKE 1-RELATED"/>
    <property type="match status" value="1"/>
</dbReference>
<dbReference type="PANTHER" id="PTHR32419">
    <property type="entry name" value="GLUTATHIONYL-HYDROQUINONE REDUCTASE"/>
    <property type="match status" value="1"/>
</dbReference>
<dbReference type="Pfam" id="PF13410">
    <property type="entry name" value="GST_C_2"/>
    <property type="match status" value="1"/>
</dbReference>
<dbReference type="Pfam" id="PF13409">
    <property type="entry name" value="GST_N_2"/>
    <property type="match status" value="1"/>
</dbReference>
<dbReference type="PIRSF" id="PIRSF015753">
    <property type="entry name" value="GST"/>
    <property type="match status" value="1"/>
</dbReference>
<dbReference type="SUPFAM" id="SSF47616">
    <property type="entry name" value="GST C-terminal domain-like"/>
    <property type="match status" value="1"/>
</dbReference>
<dbReference type="SUPFAM" id="SSF52833">
    <property type="entry name" value="Thioredoxin-like"/>
    <property type="match status" value="1"/>
</dbReference>
<dbReference type="PROSITE" id="PS50405">
    <property type="entry name" value="GST_CTER"/>
    <property type="match status" value="1"/>
</dbReference>
<proteinExistence type="evidence at protein level"/>
<comment type="function">
    <text evidence="2">Active as '1-Cys' thiol transferase against beta-hydroxyethyl disulfide (HED), as dehydroascorbate reductase and as dimethylarsinic acid reductase, while not active against the standard GST substrate 1-chloro-2,4-dinitrobenzene (CDNB).</text>
</comment>
<comment type="catalytic activity">
    <reaction evidence="2">
        <text>RX + glutathione = an S-substituted glutathione + a halide anion + H(+)</text>
        <dbReference type="Rhea" id="RHEA:16437"/>
        <dbReference type="ChEBI" id="CHEBI:15378"/>
        <dbReference type="ChEBI" id="CHEBI:16042"/>
        <dbReference type="ChEBI" id="CHEBI:17792"/>
        <dbReference type="ChEBI" id="CHEBI:57925"/>
        <dbReference type="ChEBI" id="CHEBI:90779"/>
        <dbReference type="EC" id="2.5.1.18"/>
    </reaction>
</comment>
<comment type="biophysicochemical properties">
    <kinetics>
        <KM evidence="2">1.4 mM for reduced glutathione (GSH)</KM>
    </kinetics>
</comment>
<comment type="subcellular location">
    <subcellularLocation>
        <location evidence="3">Cytoplasm</location>
    </subcellularLocation>
</comment>
<comment type="induction">
    <text evidence="3">Up-regulated by tert-butyl hydroperoxide (t-BOOH) in an MSN2/4-dependent manner.</text>
</comment>
<comment type="similarity">
    <text evidence="4">Belongs to the GST superfamily. Omega family.</text>
</comment>
<accession>Q04806</accession>
<accession>D6W077</accession>
<organism>
    <name type="scientific">Saccharomyces cerevisiae (strain ATCC 204508 / S288c)</name>
    <name type="common">Baker's yeast</name>
    <dbReference type="NCBI Taxonomy" id="559292"/>
    <lineage>
        <taxon>Eukaryota</taxon>
        <taxon>Fungi</taxon>
        <taxon>Dikarya</taxon>
        <taxon>Ascomycota</taxon>
        <taxon>Saccharomycotina</taxon>
        <taxon>Saccharomycetes</taxon>
        <taxon>Saccharomycetales</taxon>
        <taxon>Saccharomycetaceae</taxon>
        <taxon>Saccharomyces</taxon>
    </lineage>
</organism>
<feature type="chain" id="PRO_0000203338" description="Glutathione S-transferase omega-like 3">
    <location>
        <begin position="1"/>
        <end position="366"/>
    </location>
</feature>
<feature type="domain" description="GST C-terminal">
    <location>
        <begin position="197"/>
        <end position="349"/>
    </location>
</feature>
<feature type="active site" evidence="1">
    <location>
        <position position="46"/>
    </location>
</feature>
<reference key="1">
    <citation type="journal article" date="1997" name="Nature">
        <title>The nucleotide sequence of Saccharomyces cerevisiae chromosome XIII.</title>
        <authorList>
            <person name="Bowman S."/>
            <person name="Churcher C.M."/>
            <person name="Badcock K."/>
            <person name="Brown D."/>
            <person name="Chillingworth T."/>
            <person name="Connor R."/>
            <person name="Dedman K."/>
            <person name="Devlin K."/>
            <person name="Gentles S."/>
            <person name="Hamlin N."/>
            <person name="Hunt S."/>
            <person name="Jagels K."/>
            <person name="Lye G."/>
            <person name="Moule S."/>
            <person name="Odell C."/>
            <person name="Pearson D."/>
            <person name="Rajandream M.A."/>
            <person name="Rice P."/>
            <person name="Skelton J."/>
            <person name="Walsh S.V."/>
            <person name="Whitehead S."/>
            <person name="Barrell B.G."/>
        </authorList>
    </citation>
    <scope>NUCLEOTIDE SEQUENCE [LARGE SCALE GENOMIC DNA]</scope>
    <source>
        <strain>ATCC 204508 / S288c</strain>
    </source>
</reference>
<reference key="2">
    <citation type="journal article" date="2014" name="G3 (Bethesda)">
        <title>The reference genome sequence of Saccharomyces cerevisiae: Then and now.</title>
        <authorList>
            <person name="Engel S.R."/>
            <person name="Dietrich F.S."/>
            <person name="Fisk D.G."/>
            <person name="Binkley G."/>
            <person name="Balakrishnan R."/>
            <person name="Costanzo M.C."/>
            <person name="Dwight S.S."/>
            <person name="Hitz B.C."/>
            <person name="Karra K."/>
            <person name="Nash R.S."/>
            <person name="Weng S."/>
            <person name="Wong E.D."/>
            <person name="Lloyd P."/>
            <person name="Skrzypek M.S."/>
            <person name="Miyasato S.R."/>
            <person name="Simison M."/>
            <person name="Cherry J.M."/>
        </authorList>
    </citation>
    <scope>GENOME REANNOTATION</scope>
    <source>
        <strain>ATCC 204508 / S288c</strain>
    </source>
</reference>
<reference key="3">
    <citation type="journal article" date="2007" name="Genome Res.">
        <title>Approaching a complete repository of sequence-verified protein-encoding clones for Saccharomyces cerevisiae.</title>
        <authorList>
            <person name="Hu Y."/>
            <person name="Rolfs A."/>
            <person name="Bhullar B."/>
            <person name="Murthy T.V.S."/>
            <person name="Zhu C."/>
            <person name="Berger M.F."/>
            <person name="Camargo A.A."/>
            <person name="Kelley F."/>
            <person name="McCarron S."/>
            <person name="Jepson D."/>
            <person name="Richardson A."/>
            <person name="Raphael J."/>
            <person name="Moreira D."/>
            <person name="Taycher E."/>
            <person name="Zuo D."/>
            <person name="Mohr S."/>
            <person name="Kane M.F."/>
            <person name="Williamson J."/>
            <person name="Simpson A.J.G."/>
            <person name="Bulyk M.L."/>
            <person name="Harlow E."/>
            <person name="Marsischky G."/>
            <person name="Kolodner R.D."/>
            <person name="LaBaer J."/>
        </authorList>
    </citation>
    <scope>NUCLEOTIDE SEQUENCE [GENOMIC DNA]</scope>
    <source>
        <strain>ATCC 204508 / S288c</strain>
    </source>
</reference>
<reference key="4">
    <citation type="journal article" date="2006" name="Biochem. J.">
        <title>Saccharomyces cerevisiae cells have three Omega class glutathione S-transferases acting as 1-Cys thiol transferases.</title>
        <authorList>
            <person name="Garcera A."/>
            <person name="Barreto L."/>
            <person name="Piedrafita L."/>
            <person name="Tamarit J."/>
            <person name="Herrero E."/>
        </authorList>
    </citation>
    <scope>FUNCTION</scope>
    <scope>ENZYME ACTIVITY</scope>
    <scope>BIOPHYSICOCHEMICAL PROPERTIES</scope>
</reference>
<reference key="5">
    <citation type="journal article" date="2006" name="Eukaryot. Cell">
        <title>A peroxisomal glutathione transferase of Saccharomyces cerevisiae is functionally related to sulfur amino acid metabolism.</title>
        <authorList>
            <person name="Barreto L."/>
            <person name="Garcera A."/>
            <person name="Jansson K."/>
            <person name="Sunnerhagen P."/>
            <person name="Herrero E."/>
        </authorList>
    </citation>
    <scope>SUBCELLULAR LOCATION</scope>
    <scope>INDUCTION</scope>
</reference>